<reference key="1">
    <citation type="journal article" date="2002" name="Nature">
        <title>The genome sequence of Schizosaccharomyces pombe.</title>
        <authorList>
            <person name="Wood V."/>
            <person name="Gwilliam R."/>
            <person name="Rajandream M.A."/>
            <person name="Lyne M.H."/>
            <person name="Lyne R."/>
            <person name="Stewart A."/>
            <person name="Sgouros J.G."/>
            <person name="Peat N."/>
            <person name="Hayles J."/>
            <person name="Baker S.G."/>
            <person name="Basham D."/>
            <person name="Bowman S."/>
            <person name="Brooks K."/>
            <person name="Brown D."/>
            <person name="Brown S."/>
            <person name="Chillingworth T."/>
            <person name="Churcher C.M."/>
            <person name="Collins M."/>
            <person name="Connor R."/>
            <person name="Cronin A."/>
            <person name="Davis P."/>
            <person name="Feltwell T."/>
            <person name="Fraser A."/>
            <person name="Gentles S."/>
            <person name="Goble A."/>
            <person name="Hamlin N."/>
            <person name="Harris D.E."/>
            <person name="Hidalgo J."/>
            <person name="Hodgson G."/>
            <person name="Holroyd S."/>
            <person name="Hornsby T."/>
            <person name="Howarth S."/>
            <person name="Huckle E.J."/>
            <person name="Hunt S."/>
            <person name="Jagels K."/>
            <person name="James K.D."/>
            <person name="Jones L."/>
            <person name="Jones M."/>
            <person name="Leather S."/>
            <person name="McDonald S."/>
            <person name="McLean J."/>
            <person name="Mooney P."/>
            <person name="Moule S."/>
            <person name="Mungall K.L."/>
            <person name="Murphy L.D."/>
            <person name="Niblett D."/>
            <person name="Odell C."/>
            <person name="Oliver K."/>
            <person name="O'Neil S."/>
            <person name="Pearson D."/>
            <person name="Quail M.A."/>
            <person name="Rabbinowitsch E."/>
            <person name="Rutherford K.M."/>
            <person name="Rutter S."/>
            <person name="Saunders D."/>
            <person name="Seeger K."/>
            <person name="Sharp S."/>
            <person name="Skelton J."/>
            <person name="Simmonds M.N."/>
            <person name="Squares R."/>
            <person name="Squares S."/>
            <person name="Stevens K."/>
            <person name="Taylor K."/>
            <person name="Taylor R.G."/>
            <person name="Tivey A."/>
            <person name="Walsh S.V."/>
            <person name="Warren T."/>
            <person name="Whitehead S."/>
            <person name="Woodward J.R."/>
            <person name="Volckaert G."/>
            <person name="Aert R."/>
            <person name="Robben J."/>
            <person name="Grymonprez B."/>
            <person name="Weltjens I."/>
            <person name="Vanstreels E."/>
            <person name="Rieger M."/>
            <person name="Schaefer M."/>
            <person name="Mueller-Auer S."/>
            <person name="Gabel C."/>
            <person name="Fuchs M."/>
            <person name="Duesterhoeft A."/>
            <person name="Fritzc C."/>
            <person name="Holzer E."/>
            <person name="Moestl D."/>
            <person name="Hilbert H."/>
            <person name="Borzym K."/>
            <person name="Langer I."/>
            <person name="Beck A."/>
            <person name="Lehrach H."/>
            <person name="Reinhardt R."/>
            <person name="Pohl T.M."/>
            <person name="Eger P."/>
            <person name="Zimmermann W."/>
            <person name="Wedler H."/>
            <person name="Wambutt R."/>
            <person name="Purnelle B."/>
            <person name="Goffeau A."/>
            <person name="Cadieu E."/>
            <person name="Dreano S."/>
            <person name="Gloux S."/>
            <person name="Lelaure V."/>
            <person name="Mottier S."/>
            <person name="Galibert F."/>
            <person name="Aves S.J."/>
            <person name="Xiang Z."/>
            <person name="Hunt C."/>
            <person name="Moore K."/>
            <person name="Hurst S.M."/>
            <person name="Lucas M."/>
            <person name="Rochet M."/>
            <person name="Gaillardin C."/>
            <person name="Tallada V.A."/>
            <person name="Garzon A."/>
            <person name="Thode G."/>
            <person name="Daga R.R."/>
            <person name="Cruzado L."/>
            <person name="Jimenez J."/>
            <person name="Sanchez M."/>
            <person name="del Rey F."/>
            <person name="Benito J."/>
            <person name="Dominguez A."/>
            <person name="Revuelta J.L."/>
            <person name="Moreno S."/>
            <person name="Armstrong J."/>
            <person name="Forsburg S.L."/>
            <person name="Cerutti L."/>
            <person name="Lowe T."/>
            <person name="McCombie W.R."/>
            <person name="Paulsen I."/>
            <person name="Potashkin J."/>
            <person name="Shpakovski G.V."/>
            <person name="Ussery D."/>
            <person name="Barrell B.G."/>
            <person name="Nurse P."/>
        </authorList>
    </citation>
    <scope>NUCLEOTIDE SEQUENCE [LARGE SCALE GENOMIC DNA]</scope>
    <source>
        <strain>972 / ATCC 24843</strain>
    </source>
</reference>
<reference key="2">
    <citation type="journal article" date="1998" name="Biochem. Biophys. Res. Commun.">
        <title>Isolation and characterization of an invertase and its repressor genes from Schizosaccharomyces pombe.</title>
        <authorList>
            <person name="Tanaka N."/>
            <person name="Ohuchi N."/>
            <person name="Mukai Y."/>
            <person name="Osaka Y."/>
            <person name="Ohtani Y."/>
            <person name="Tabuchi M."/>
            <person name="Bhuiyan M.S.A."/>
            <person name="Fukui H."/>
            <person name="Harashima S."/>
            <person name="Takegawa K."/>
        </authorList>
    </citation>
    <scope>IDENTIFICATION</scope>
    <scope>FUNCTION</scope>
</reference>
<accession>O14335</accession>
<name>SCR1_SCHPO</name>
<evidence type="ECO:0000255" key="1">
    <source>
        <dbReference type="PROSITE-ProRule" id="PRU00042"/>
    </source>
</evidence>
<evidence type="ECO:0000256" key="2">
    <source>
        <dbReference type="SAM" id="MobiDB-lite"/>
    </source>
</evidence>
<evidence type="ECO:0000269" key="3">
    <source>
    </source>
</evidence>
<evidence type="ECO:0000305" key="4"/>
<gene>
    <name type="primary">scr1</name>
    <name type="ORF">SPBC1D7.02c</name>
</gene>
<keyword id="KW-0238">DNA-binding</keyword>
<keyword id="KW-0479">Metal-binding</keyword>
<keyword id="KW-0539">Nucleus</keyword>
<keyword id="KW-1185">Reference proteome</keyword>
<keyword id="KW-0677">Repeat</keyword>
<keyword id="KW-0678">Repressor</keyword>
<keyword id="KW-0804">Transcription</keyword>
<keyword id="KW-0805">Transcription regulation</keyword>
<keyword id="KW-0862">Zinc</keyword>
<keyword id="KW-0863">Zinc-finger</keyword>
<sequence>MSEATTATTTGKPSRSTKNPDAPRPYKCPLCTKAFYRLEHQTRHIRTHTGEKPHVCTFPGCAKRFSRSDELTRHARIHTNANSRRNAAAAAAANNSARSSNSPAGNLEPSTNNAGVHMTNASMNPNVNPSYPVFIPQVGMSVAPPVATAAVSMSYPHHYSASVQQQQATFVSNGQPHNLPAQAQPATIYGIPDALHTTQNGTTIHVTGTPPGAVSQRSEPDSRLSSMNEMQLLASAAANQLDAAPRITPTKSSGVNLMPLSNAPSPPKQMNVVGSLPSSSNTSPNHLASVPNRGLTSNSSTGSFTKYTNGSSNSLYSNSSMQTPYLPSKSNSSTSLHSMYGVGTTAYAPQSLRYAHYNYLPYSRPSVSNGFDDDSSSSDFAHFRYQRRSRPVSPCSTAPSSPTFSTRSFSPTPDVTPLVTPAHSPRLRPMDDPSCVQLPSIRSLSLRPSQVPLIPPLKCDPNAFSASTPASGAVSRTPSSVSLSSLSNVNSSMPHKPASQSNVGPVRISSNRRSRKFSSSSRVSVSNLLAGSPPSPSSSTKSASSSYSTTTPAFSIGPLTPMTKP</sequence>
<comment type="function">
    <text evidence="3">Involved in carbon catabolite repression. Represses the transcription of various genes including the inv1 gene.</text>
</comment>
<comment type="subcellular location">
    <subcellularLocation>
        <location evidence="4">Nucleus</location>
    </subcellularLocation>
</comment>
<comment type="similarity">
    <text evidence="4">Belongs to the creA/MIG C2H2-type zinc-finger protein family.</text>
</comment>
<organism>
    <name type="scientific">Schizosaccharomyces pombe (strain 972 / ATCC 24843)</name>
    <name type="common">Fission yeast</name>
    <dbReference type="NCBI Taxonomy" id="284812"/>
    <lineage>
        <taxon>Eukaryota</taxon>
        <taxon>Fungi</taxon>
        <taxon>Dikarya</taxon>
        <taxon>Ascomycota</taxon>
        <taxon>Taphrinomycotina</taxon>
        <taxon>Schizosaccharomycetes</taxon>
        <taxon>Schizosaccharomycetales</taxon>
        <taxon>Schizosaccharomycetaceae</taxon>
        <taxon>Schizosaccharomyces</taxon>
    </lineage>
</organism>
<proteinExistence type="inferred from homology"/>
<dbReference type="EMBL" id="CU329671">
    <property type="protein sequence ID" value="CAB10978.1"/>
    <property type="molecule type" value="Genomic_DNA"/>
</dbReference>
<dbReference type="PIR" id="T39863">
    <property type="entry name" value="T39863"/>
</dbReference>
<dbReference type="RefSeq" id="NP_595717.1">
    <property type="nucleotide sequence ID" value="NM_001021615.2"/>
</dbReference>
<dbReference type="SMR" id="O14335"/>
<dbReference type="BioGRID" id="277288">
    <property type="interactions" value="5"/>
</dbReference>
<dbReference type="FunCoup" id="O14335">
    <property type="interactions" value="238"/>
</dbReference>
<dbReference type="STRING" id="284812.O14335"/>
<dbReference type="iPTMnet" id="O14335"/>
<dbReference type="PaxDb" id="4896-SPBC1D7.02c.1"/>
<dbReference type="EnsemblFungi" id="SPBC1D7.02c.1">
    <property type="protein sequence ID" value="SPBC1D7.02c.1:pep"/>
    <property type="gene ID" value="SPBC1D7.02c"/>
</dbReference>
<dbReference type="GeneID" id="2540768"/>
<dbReference type="KEGG" id="spo:2540768"/>
<dbReference type="PomBase" id="SPBC1D7.02c">
    <property type="gene designation" value="scr1"/>
</dbReference>
<dbReference type="VEuPathDB" id="FungiDB:SPBC1D7.02c"/>
<dbReference type="eggNOG" id="KOG1721">
    <property type="taxonomic scope" value="Eukaryota"/>
</dbReference>
<dbReference type="HOGENOM" id="CLU_482468_0_0_1"/>
<dbReference type="InParanoid" id="O14335"/>
<dbReference type="OMA" id="SGHREIN"/>
<dbReference type="PRO" id="PR:O14335"/>
<dbReference type="Proteomes" id="UP000002485">
    <property type="component" value="Chromosome II"/>
</dbReference>
<dbReference type="GO" id="GO:0005737">
    <property type="term" value="C:cytoplasm"/>
    <property type="evidence" value="ECO:0000314"/>
    <property type="project" value="PomBase"/>
</dbReference>
<dbReference type="GO" id="GO:0005829">
    <property type="term" value="C:cytosol"/>
    <property type="evidence" value="ECO:0007005"/>
    <property type="project" value="PomBase"/>
</dbReference>
<dbReference type="GO" id="GO:0005654">
    <property type="term" value="C:nucleoplasm"/>
    <property type="evidence" value="ECO:0000269"/>
    <property type="project" value="PomBase"/>
</dbReference>
<dbReference type="GO" id="GO:0005634">
    <property type="term" value="C:nucleus"/>
    <property type="evidence" value="ECO:0000314"/>
    <property type="project" value="PomBase"/>
</dbReference>
<dbReference type="GO" id="GO:0001227">
    <property type="term" value="F:DNA-binding transcription repressor activity, RNA polymerase II-specific"/>
    <property type="evidence" value="ECO:0000269"/>
    <property type="project" value="PomBase"/>
</dbReference>
<dbReference type="GO" id="GO:0000978">
    <property type="term" value="F:RNA polymerase II cis-regulatory region sequence-specific DNA binding"/>
    <property type="evidence" value="ECO:0000318"/>
    <property type="project" value="GO_Central"/>
</dbReference>
<dbReference type="GO" id="GO:0008270">
    <property type="term" value="F:zinc ion binding"/>
    <property type="evidence" value="ECO:0007669"/>
    <property type="project" value="UniProtKB-KW"/>
</dbReference>
<dbReference type="GO" id="GO:0060257">
    <property type="term" value="P:negative regulation of flocculation"/>
    <property type="evidence" value="ECO:0000269"/>
    <property type="project" value="PomBase"/>
</dbReference>
<dbReference type="GO" id="GO:0000122">
    <property type="term" value="P:negative regulation of transcription by RNA polymerase II"/>
    <property type="evidence" value="ECO:0000315"/>
    <property type="project" value="PomBase"/>
</dbReference>
<dbReference type="FunFam" id="3.30.160.60:FF:000089">
    <property type="entry name" value="DNA-binding protein creA"/>
    <property type="match status" value="1"/>
</dbReference>
<dbReference type="FunFam" id="3.30.160.60:FF:000152">
    <property type="entry name" value="DNA-binding protein creA"/>
    <property type="match status" value="1"/>
</dbReference>
<dbReference type="Gene3D" id="3.30.160.60">
    <property type="entry name" value="Classic Zinc Finger"/>
    <property type="match status" value="2"/>
</dbReference>
<dbReference type="InterPro" id="IPR051007">
    <property type="entry name" value="creA/MIG_C2H2-ZnF"/>
</dbReference>
<dbReference type="InterPro" id="IPR036236">
    <property type="entry name" value="Znf_C2H2_sf"/>
</dbReference>
<dbReference type="InterPro" id="IPR013087">
    <property type="entry name" value="Znf_C2H2_type"/>
</dbReference>
<dbReference type="PANTHER" id="PTHR47428">
    <property type="entry name" value="REGULATORY PROTEIN MIG1-RELATED"/>
    <property type="match status" value="1"/>
</dbReference>
<dbReference type="PANTHER" id="PTHR47428:SF1">
    <property type="entry name" value="REGULATORY PROTEIN MIG1-RELATED"/>
    <property type="match status" value="1"/>
</dbReference>
<dbReference type="Pfam" id="PF00096">
    <property type="entry name" value="zf-C2H2"/>
    <property type="match status" value="2"/>
</dbReference>
<dbReference type="SMART" id="SM00355">
    <property type="entry name" value="ZnF_C2H2"/>
    <property type="match status" value="2"/>
</dbReference>
<dbReference type="SUPFAM" id="SSF57667">
    <property type="entry name" value="beta-beta-alpha zinc fingers"/>
    <property type="match status" value="1"/>
</dbReference>
<dbReference type="PROSITE" id="PS00028">
    <property type="entry name" value="ZINC_FINGER_C2H2_1"/>
    <property type="match status" value="2"/>
</dbReference>
<dbReference type="PROSITE" id="PS50157">
    <property type="entry name" value="ZINC_FINGER_C2H2_2"/>
    <property type="match status" value="2"/>
</dbReference>
<protein>
    <recommendedName>
        <fullName>DNA-binding protein scr1</fullName>
    </recommendedName>
</protein>
<feature type="chain" id="PRO_0000046885" description="DNA-binding protein scr1">
    <location>
        <begin position="1"/>
        <end position="565"/>
    </location>
</feature>
<feature type="zinc finger region" description="C2H2-type 1" evidence="1">
    <location>
        <begin position="26"/>
        <end position="48"/>
    </location>
</feature>
<feature type="zinc finger region" description="C2H2-type 2" evidence="1">
    <location>
        <begin position="54"/>
        <end position="78"/>
    </location>
</feature>
<feature type="region of interest" description="Disordered" evidence="2">
    <location>
        <begin position="1"/>
        <end position="25"/>
    </location>
</feature>
<feature type="region of interest" description="Disordered" evidence="2">
    <location>
        <begin position="79"/>
        <end position="119"/>
    </location>
</feature>
<feature type="region of interest" description="Disordered" evidence="2">
    <location>
        <begin position="261"/>
        <end position="303"/>
    </location>
</feature>
<feature type="region of interest" description="Disordered" evidence="2">
    <location>
        <begin position="390"/>
        <end position="434"/>
    </location>
</feature>
<feature type="region of interest" description="Disordered" evidence="2">
    <location>
        <begin position="466"/>
        <end position="565"/>
    </location>
</feature>
<feature type="compositionally biased region" description="Polar residues" evidence="2">
    <location>
        <begin position="1"/>
        <end position="19"/>
    </location>
</feature>
<feature type="compositionally biased region" description="Low complexity" evidence="2">
    <location>
        <begin position="80"/>
        <end position="102"/>
    </location>
</feature>
<feature type="compositionally biased region" description="Polar residues" evidence="2">
    <location>
        <begin position="108"/>
        <end position="119"/>
    </location>
</feature>
<feature type="compositionally biased region" description="Polar residues" evidence="2">
    <location>
        <begin position="276"/>
        <end position="286"/>
    </location>
</feature>
<feature type="compositionally biased region" description="Polar residues" evidence="2">
    <location>
        <begin position="294"/>
        <end position="303"/>
    </location>
</feature>
<feature type="compositionally biased region" description="Low complexity" evidence="2">
    <location>
        <begin position="391"/>
        <end position="413"/>
    </location>
</feature>
<feature type="compositionally biased region" description="Polar residues" evidence="2">
    <location>
        <begin position="466"/>
        <end position="478"/>
    </location>
</feature>
<feature type="compositionally biased region" description="Low complexity" evidence="2">
    <location>
        <begin position="479"/>
        <end position="492"/>
    </location>
</feature>
<feature type="compositionally biased region" description="Low complexity" evidence="2">
    <location>
        <begin position="517"/>
        <end position="526"/>
    </location>
</feature>
<feature type="compositionally biased region" description="Low complexity" evidence="2">
    <location>
        <begin position="537"/>
        <end position="555"/>
    </location>
</feature>